<gene>
    <name evidence="3" type="primary">tpk-1</name>
    <name evidence="3" type="ORF">ZK637.9</name>
</gene>
<feature type="chain" id="PRO_0000072646" description="Thiamin pyrophosphokinase 1">
    <location>
        <begin position="1"/>
        <end position="243"/>
    </location>
</feature>
<feature type="mutagenesis site" description="In qm162; maternal-effect mutation. Partial loss-of-function. Prolongs embryonic and postembryonic development, increases lifespan, reduces brood size, reduces the rate of pharyngeal pumping and increases the defecation cycle rate. Animals appear slimmer and more transparent. In response to a thiamine-depleted diet, the pharyngeal pumping rate further reduces and animals subsquently die. In the absence of food, animals die within a few days as arrested L1 larvae and fail to resume development when placed in the presence of food. No effect on oxygen consumption rate. Reduces lifespan in aha-1, ceh-18, hif-1, jun-1, nhr-105 or taf-4 RNAi mutant background." evidence="1">
    <original>C</original>
    <variation>Y</variation>
    <location>
        <position position="67"/>
    </location>
</feature>
<feature type="sequence conflict" description="In Ref. 1; AAS21678." evidence="2" ref="1">
    <location>
        <begin position="146"/>
        <end position="160"/>
    </location>
</feature>
<evidence type="ECO:0000269" key="1">
    <source>
    </source>
</evidence>
<evidence type="ECO:0000305" key="2"/>
<evidence type="ECO:0000312" key="3">
    <source>
        <dbReference type="WormBase" id="ZK637.9"/>
    </source>
</evidence>
<organism>
    <name type="scientific">Caenorhabditis elegans</name>
    <dbReference type="NCBI Taxonomy" id="6239"/>
    <lineage>
        <taxon>Eukaryota</taxon>
        <taxon>Metazoa</taxon>
        <taxon>Ecdysozoa</taxon>
        <taxon>Nematoda</taxon>
        <taxon>Chromadorea</taxon>
        <taxon>Rhabditida</taxon>
        <taxon>Rhabditina</taxon>
        <taxon>Rhabditomorpha</taxon>
        <taxon>Rhabditoidea</taxon>
        <taxon>Rhabditidae</taxon>
        <taxon>Peloderinae</taxon>
        <taxon>Caenorhabditis</taxon>
    </lineage>
</organism>
<name>TPK1_CAEEL</name>
<dbReference type="EC" id="2.7.6.2"/>
<dbReference type="EMBL" id="AY513235">
    <property type="protein sequence ID" value="AAS21678.1"/>
    <property type="status" value="ALT_SEQ"/>
    <property type="molecule type" value="mRNA"/>
</dbReference>
<dbReference type="EMBL" id="BX284603">
    <property type="protein sequence ID" value="CAI46594.1"/>
    <property type="molecule type" value="Genomic_DNA"/>
</dbReference>
<dbReference type="PIR" id="S15797">
    <property type="entry name" value="S15797"/>
</dbReference>
<dbReference type="RefSeq" id="NP_001023023.1">
    <property type="nucleotide sequence ID" value="NM_001027852.1"/>
</dbReference>
<dbReference type="RefSeq" id="NP_001023024.1">
    <property type="nucleotide sequence ID" value="NM_001027853.2"/>
</dbReference>
<dbReference type="SMR" id="P30636"/>
<dbReference type="FunCoup" id="P30636">
    <property type="interactions" value="1565"/>
</dbReference>
<dbReference type="STRING" id="6239.ZK637.9b.1"/>
<dbReference type="PaxDb" id="6239-ZK637.9b"/>
<dbReference type="PeptideAtlas" id="P30636"/>
<dbReference type="EnsemblMetazoa" id="ZK637.9.1">
    <property type="protein sequence ID" value="ZK637.9.1"/>
    <property type="gene ID" value="WBGene00014027"/>
</dbReference>
<dbReference type="GeneID" id="176258"/>
<dbReference type="KEGG" id="cel:CELE_ZK637.9"/>
<dbReference type="UCSC" id="ZK637.9b">
    <property type="organism name" value="c. elegans"/>
</dbReference>
<dbReference type="AGR" id="WB:WBGene00014027"/>
<dbReference type="CTD" id="176258"/>
<dbReference type="WormBase" id="ZK637.9">
    <property type="protein sequence ID" value="CE37947"/>
    <property type="gene ID" value="WBGene00014027"/>
    <property type="gene designation" value="tpk-1"/>
</dbReference>
<dbReference type="eggNOG" id="KOG3153">
    <property type="taxonomic scope" value="Eukaryota"/>
</dbReference>
<dbReference type="GeneTree" id="ENSGT00390000016016"/>
<dbReference type="InParanoid" id="P30636"/>
<dbReference type="OMA" id="TDMCKAL"/>
<dbReference type="OrthoDB" id="25149at2759"/>
<dbReference type="PhylomeDB" id="P30636"/>
<dbReference type="BRENDA" id="2.7.6.2">
    <property type="organism ID" value="1045"/>
</dbReference>
<dbReference type="Reactome" id="R-CEL-196819">
    <property type="pathway name" value="Vitamin B1 (thiamin) metabolism"/>
</dbReference>
<dbReference type="UniPathway" id="UPA00060">
    <property type="reaction ID" value="UER00597"/>
</dbReference>
<dbReference type="PRO" id="PR:P30636"/>
<dbReference type="Proteomes" id="UP000001940">
    <property type="component" value="Chromosome III"/>
</dbReference>
<dbReference type="Bgee" id="WBGene00014027">
    <property type="expression patterns" value="Expressed in germ line (C elegans) and 4 other cell types or tissues"/>
</dbReference>
<dbReference type="GO" id="GO:0005524">
    <property type="term" value="F:ATP binding"/>
    <property type="evidence" value="ECO:0007669"/>
    <property type="project" value="UniProtKB-KW"/>
</dbReference>
<dbReference type="GO" id="GO:0016301">
    <property type="term" value="F:kinase activity"/>
    <property type="evidence" value="ECO:0007669"/>
    <property type="project" value="UniProtKB-KW"/>
</dbReference>
<dbReference type="GO" id="GO:0030975">
    <property type="term" value="F:thiamine binding"/>
    <property type="evidence" value="ECO:0007669"/>
    <property type="project" value="InterPro"/>
</dbReference>
<dbReference type="GO" id="GO:0004788">
    <property type="term" value="F:thiamine diphosphokinase activity"/>
    <property type="evidence" value="ECO:0000318"/>
    <property type="project" value="GO_Central"/>
</dbReference>
<dbReference type="GO" id="GO:0009229">
    <property type="term" value="P:thiamine diphosphate biosynthetic process"/>
    <property type="evidence" value="ECO:0000318"/>
    <property type="project" value="GO_Central"/>
</dbReference>
<dbReference type="GO" id="GO:0006772">
    <property type="term" value="P:thiamine metabolic process"/>
    <property type="evidence" value="ECO:0007669"/>
    <property type="project" value="InterPro"/>
</dbReference>
<dbReference type="CDD" id="cd07995">
    <property type="entry name" value="TPK"/>
    <property type="match status" value="1"/>
</dbReference>
<dbReference type="FunFam" id="3.40.50.10240:FF:000016">
    <property type="entry name" value="Thiamin pyrophosphokinase 1"/>
    <property type="match status" value="1"/>
</dbReference>
<dbReference type="Gene3D" id="3.40.50.10240">
    <property type="entry name" value="Thiamin pyrophosphokinase, catalytic domain"/>
    <property type="match status" value="1"/>
</dbReference>
<dbReference type="InterPro" id="IPR006282">
    <property type="entry name" value="Thi_PPkinase"/>
</dbReference>
<dbReference type="InterPro" id="IPR016966">
    <property type="entry name" value="Thiamin_pyrophosphokinase_euk"/>
</dbReference>
<dbReference type="InterPro" id="IPR007373">
    <property type="entry name" value="Thiamin_PyroPKinase_B1-bd"/>
</dbReference>
<dbReference type="InterPro" id="IPR036371">
    <property type="entry name" value="TPK_B1-bd_sf"/>
</dbReference>
<dbReference type="InterPro" id="IPR007371">
    <property type="entry name" value="TPK_catalytic"/>
</dbReference>
<dbReference type="InterPro" id="IPR036759">
    <property type="entry name" value="TPK_catalytic_sf"/>
</dbReference>
<dbReference type="NCBIfam" id="TIGR01378">
    <property type="entry name" value="thi_PPkinase"/>
    <property type="match status" value="1"/>
</dbReference>
<dbReference type="PANTHER" id="PTHR13622">
    <property type="entry name" value="THIAMIN PYROPHOSPHOKINASE"/>
    <property type="match status" value="1"/>
</dbReference>
<dbReference type="PANTHER" id="PTHR13622:SF8">
    <property type="entry name" value="THIAMIN PYROPHOSPHOKINASE 1"/>
    <property type="match status" value="1"/>
</dbReference>
<dbReference type="Pfam" id="PF04265">
    <property type="entry name" value="TPK_B1_binding"/>
    <property type="match status" value="1"/>
</dbReference>
<dbReference type="Pfam" id="PF04263">
    <property type="entry name" value="TPK_catalytic"/>
    <property type="match status" value="1"/>
</dbReference>
<dbReference type="PIRSF" id="PIRSF031057">
    <property type="entry name" value="Thiamin_pyrophosphokinase"/>
    <property type="match status" value="1"/>
</dbReference>
<dbReference type="SMART" id="SM00983">
    <property type="entry name" value="TPK_B1_binding"/>
    <property type="match status" value="1"/>
</dbReference>
<dbReference type="SUPFAM" id="SSF63999">
    <property type="entry name" value="Thiamin pyrophosphokinase, catalytic domain"/>
    <property type="match status" value="1"/>
</dbReference>
<dbReference type="SUPFAM" id="SSF63862">
    <property type="entry name" value="Thiamin pyrophosphokinase, substrate-binding domain"/>
    <property type="match status" value="1"/>
</dbReference>
<sequence length="243" mass="27314">MSKKLKPFEILEDSCASVCIWLNGEPTAISNRAENLWNKAKYRVATDGAVNEILKRKSFVEWPHIICGDFDSINKQIDTKNAKVVHLPDQDYTDLSKSVQWCLEQKTLTSWEFENIVVLGGLNGRFDHTMSTLSSLIRFVDSQTPVIVLDSRNLVLAVPTGDSNLDVNLEMTTKMCGIIPIVQKETIVSSIGLKYEMENLALEFGKLISTSNEVTTSQVFLKSSSSLIFSIELENWVYKLDSL</sequence>
<keyword id="KW-0067">ATP-binding</keyword>
<keyword id="KW-0418">Kinase</keyword>
<keyword id="KW-0547">Nucleotide-binding</keyword>
<keyword id="KW-1185">Reference proteome</keyword>
<keyword id="KW-0808">Transferase</keyword>
<reference key="1">
    <citation type="journal article" date="2004" name="Genetics">
        <title>Thiamine pyrophosphate biosynthesis and transport in the nematode Caenorhabditis elegans.</title>
        <authorList>
            <person name="de Jong L."/>
            <person name="Meng Y."/>
            <person name="Dent J."/>
            <person name="Hekimi S."/>
        </authorList>
    </citation>
    <scope>NUCLEOTIDE SEQUENCE [MRNA]</scope>
    <scope>FUNCTION</scope>
    <scope>MUTAGENESIS OF CYS-67</scope>
</reference>
<reference key="2">
    <citation type="journal article" date="1992" name="Nature">
        <title>The C. elegans genome sequencing project: a beginning.</title>
        <authorList>
            <person name="Sulston J."/>
            <person name="Du Z."/>
            <person name="Thomas K."/>
            <person name="Wilson R."/>
            <person name="Hillier L."/>
            <person name="Staden R."/>
            <person name="Halloran N."/>
            <person name="Green P."/>
            <person name="Thierry-Mieg J."/>
            <person name="Qiu L."/>
            <person name="Dear S."/>
            <person name="Coulson A."/>
            <person name="Craxton M."/>
            <person name="Durbin R."/>
            <person name="Berks M."/>
            <person name="Metzstein M."/>
            <person name="Hawkins T."/>
            <person name="Ainscough R."/>
            <person name="Waterston R."/>
        </authorList>
    </citation>
    <scope>NUCLEOTIDE SEQUENCE [LARGE SCALE GENOMIC DNA]</scope>
    <source>
        <strain>Bristol N2</strain>
    </source>
</reference>
<reference key="3">
    <citation type="journal article" date="1998" name="Science">
        <title>Genome sequence of the nematode C. elegans: a platform for investigating biology.</title>
        <authorList>
            <consortium name="The C. elegans sequencing consortium"/>
        </authorList>
    </citation>
    <scope>NUCLEOTIDE SEQUENCE [LARGE SCALE GENOMIC DNA]</scope>
    <source>
        <strain>Bristol N2</strain>
    </source>
</reference>
<reference key="4">
    <citation type="journal article" date="2013" name="Aging (Albany NY)">
        <title>TAF-4 is required for the life extension of isp-1, clk-1 and tpk-1 Mit mutants.</title>
        <authorList>
            <person name="Khan M.H."/>
            <person name="Ligon M."/>
            <person name="Hussey L.R."/>
            <person name="Hufnal B."/>
            <person name="Farber R. II"/>
            <person name="Munkacsy E."/>
            <person name="Rodriguez A."/>
            <person name="Dillow A."/>
            <person name="Kahlig E."/>
            <person name="Rea S.L."/>
        </authorList>
    </citation>
    <scope>MUTAGENESIS OF CYS-67</scope>
</reference>
<protein>
    <recommendedName>
        <fullName>Thiamin pyrophosphokinase 1</fullName>
        <ecNumber>2.7.6.2</ecNumber>
    </recommendedName>
    <alternativeName>
        <fullName>Thiamine pyrophosphokinase 1</fullName>
        <shortName>TPK1</shortName>
    </alternativeName>
</protein>
<proteinExistence type="evidence at protein level"/>
<comment type="function">
    <text evidence="1">Catalyzes the phosphorylation of thiamine to thiamine pyrophosphate. Functions cell non-autonomously.</text>
</comment>
<comment type="catalytic activity">
    <reaction>
        <text>thiamine + ATP = thiamine diphosphate + AMP + H(+)</text>
        <dbReference type="Rhea" id="RHEA:11576"/>
        <dbReference type="ChEBI" id="CHEBI:15378"/>
        <dbReference type="ChEBI" id="CHEBI:18385"/>
        <dbReference type="ChEBI" id="CHEBI:30616"/>
        <dbReference type="ChEBI" id="CHEBI:58937"/>
        <dbReference type="ChEBI" id="CHEBI:456215"/>
        <dbReference type="EC" id="2.7.6.2"/>
    </reaction>
</comment>
<comment type="pathway">
    <text>Cofactor biosynthesis; thiamine diphosphate biosynthesis; thiamine diphosphate from thiamine: step 1/1.</text>
</comment>
<comment type="similarity">
    <text evidence="2">Belongs to the thiamine pyrophosphokinase family.</text>
</comment>
<comment type="sequence caution" evidence="2">
    <conflict type="erroneous gene model prediction">
        <sequence resource="EMBL-CDS" id="AAS21678"/>
    </conflict>
</comment>
<accession>P30636</accession>
<accession>Q5FC86</accession>
<accession>Q6R5A6</accession>